<accession>Q8Z194</accession>
<dbReference type="EC" id="4.1.1.65" evidence="1"/>
<dbReference type="EMBL" id="AL513382">
    <property type="protein sequence ID" value="CAD06828.1"/>
    <property type="molecule type" value="Genomic_DNA"/>
</dbReference>
<dbReference type="EMBL" id="AE014613">
    <property type="protein sequence ID" value="AAO71851.1"/>
    <property type="molecule type" value="Genomic_DNA"/>
</dbReference>
<dbReference type="RefSeq" id="NP_458787.1">
    <property type="nucleotide sequence ID" value="NC_003198.1"/>
</dbReference>
<dbReference type="SMR" id="Q8Z194"/>
<dbReference type="STRING" id="220341.gene:17588526"/>
<dbReference type="KEGG" id="stt:t4400"/>
<dbReference type="KEGG" id="sty:STY4708"/>
<dbReference type="PATRIC" id="fig|220341.7.peg.4809"/>
<dbReference type="eggNOG" id="COG0688">
    <property type="taxonomic scope" value="Bacteria"/>
</dbReference>
<dbReference type="HOGENOM" id="CLU_029061_4_1_6"/>
<dbReference type="OMA" id="KDYHHYH"/>
<dbReference type="OrthoDB" id="9802030at2"/>
<dbReference type="UniPathway" id="UPA00558">
    <property type="reaction ID" value="UER00616"/>
</dbReference>
<dbReference type="Proteomes" id="UP000000541">
    <property type="component" value="Chromosome"/>
</dbReference>
<dbReference type="Proteomes" id="UP000002670">
    <property type="component" value="Chromosome"/>
</dbReference>
<dbReference type="GO" id="GO:0005886">
    <property type="term" value="C:plasma membrane"/>
    <property type="evidence" value="ECO:0007669"/>
    <property type="project" value="UniProtKB-SubCell"/>
</dbReference>
<dbReference type="GO" id="GO:0004609">
    <property type="term" value="F:phosphatidylserine decarboxylase activity"/>
    <property type="evidence" value="ECO:0007669"/>
    <property type="project" value="UniProtKB-UniRule"/>
</dbReference>
<dbReference type="GO" id="GO:0006646">
    <property type="term" value="P:phosphatidylethanolamine biosynthetic process"/>
    <property type="evidence" value="ECO:0007669"/>
    <property type="project" value="UniProtKB-UniRule"/>
</dbReference>
<dbReference type="HAMAP" id="MF_00662">
    <property type="entry name" value="PS_decarb_PSD_B_type1"/>
    <property type="match status" value="1"/>
</dbReference>
<dbReference type="InterPro" id="IPR003817">
    <property type="entry name" value="PS_Dcarbxylase"/>
</dbReference>
<dbReference type="InterPro" id="IPR033177">
    <property type="entry name" value="PSD-B"/>
</dbReference>
<dbReference type="InterPro" id="IPR033178">
    <property type="entry name" value="PSD_type1_pro"/>
</dbReference>
<dbReference type="NCBIfam" id="TIGR00163">
    <property type="entry name" value="PS_decarb"/>
    <property type="match status" value="1"/>
</dbReference>
<dbReference type="PANTHER" id="PTHR10067">
    <property type="entry name" value="PHOSPHATIDYLSERINE DECARBOXYLASE"/>
    <property type="match status" value="1"/>
</dbReference>
<dbReference type="PANTHER" id="PTHR10067:SF6">
    <property type="entry name" value="PHOSPHATIDYLSERINE DECARBOXYLASE PROENZYME, MITOCHONDRIAL"/>
    <property type="match status" value="1"/>
</dbReference>
<dbReference type="Pfam" id="PF02666">
    <property type="entry name" value="PS_Dcarbxylase"/>
    <property type="match status" value="1"/>
</dbReference>
<sequence>MLNSFKLSLQYILPKLWLTRLAGWGASKRAGWLTKLVIDLFVKYYKVDMTEAQKPDTASYRTFNDFFVRPLRDDVRPLNTDPNILVMPADGVISQLGRIEEDKILQAKGHNYSLEALLAGNYLMADKFRNGTFVTTYLSPRDYHRVHMPCNGILREMIYVPGDLFSVNYLTAQNVPNLFARNERVICLFDTEFGPMAQILVGATIVGSIETVWAGTITPPREGIIKRWTWPEGEHEGSVALLKGQEMGRFKLGSTVINLFAPGKVNLIASLASLSVTKIGQPLATSTETFVAPEVEPAPLPAEEIKAEHDASPLVDNKKDDT</sequence>
<comment type="function">
    <text evidence="1">Catalyzes the formation of phosphatidylethanolamine (PtdEtn) from phosphatidylserine (PtdSer).</text>
</comment>
<comment type="catalytic activity">
    <reaction evidence="1">
        <text>a 1,2-diacyl-sn-glycero-3-phospho-L-serine + H(+) = a 1,2-diacyl-sn-glycero-3-phosphoethanolamine + CO2</text>
        <dbReference type="Rhea" id="RHEA:20828"/>
        <dbReference type="ChEBI" id="CHEBI:15378"/>
        <dbReference type="ChEBI" id="CHEBI:16526"/>
        <dbReference type="ChEBI" id="CHEBI:57262"/>
        <dbReference type="ChEBI" id="CHEBI:64612"/>
        <dbReference type="EC" id="4.1.1.65"/>
    </reaction>
</comment>
<comment type="cofactor">
    <cofactor evidence="1">
        <name>pyruvate</name>
        <dbReference type="ChEBI" id="CHEBI:15361"/>
    </cofactor>
    <text evidence="1">Binds 1 pyruvoyl group covalently per subunit.</text>
</comment>
<comment type="pathway">
    <text evidence="1">Phospholipid metabolism; phosphatidylethanolamine biosynthesis; phosphatidylethanolamine from CDP-diacylglycerol: step 2/2.</text>
</comment>
<comment type="subunit">
    <text evidence="1">Heterodimer of a large membrane-associated beta subunit and a small pyruvoyl-containing alpha subunit.</text>
</comment>
<comment type="subcellular location">
    <subcellularLocation>
        <location evidence="1">Cell membrane</location>
        <topology evidence="1">Peripheral membrane protein</topology>
    </subcellularLocation>
</comment>
<comment type="PTM">
    <text evidence="1">Is synthesized initially as an inactive proenzyme. Formation of the active enzyme involves a self-maturation process in which the active site pyruvoyl group is generated from an internal serine residue via an autocatalytic post-translational modification. Two non-identical subunits are generated from the proenzyme in this reaction, and the pyruvate is formed at the N-terminus of the alpha chain, which is derived from the carboxyl end of the proenzyme. The autoendoproteolytic cleavage occurs by a canonical serine protease mechanism, in which the side chain hydroxyl group of the serine supplies its oxygen atom to form the C-terminus of the beta chain, while the remainder of the serine residue undergoes an oxidative deamination to produce ammonia and the pyruvoyl prosthetic group on the alpha chain. During this reaction, the Ser that is part of the protease active site of the proenzyme becomes the pyruvoyl prosthetic group, which constitutes an essential element of the active site of the mature decarboxylase.</text>
</comment>
<comment type="similarity">
    <text evidence="1">Belongs to the phosphatidylserine decarboxylase family. PSD-B subfamily. Prokaryotic type I sub-subfamily.</text>
</comment>
<feature type="chain" id="PRO_0000029695" description="Phosphatidylserine decarboxylase beta chain" evidence="1">
    <location>
        <begin position="1"/>
        <end position="253"/>
    </location>
</feature>
<feature type="chain" id="PRO_0000029696" description="Phosphatidylserine decarboxylase alpha chain" evidence="1">
    <location>
        <begin position="254"/>
        <end position="322"/>
    </location>
</feature>
<feature type="region of interest" description="Disordered" evidence="2">
    <location>
        <begin position="297"/>
        <end position="322"/>
    </location>
</feature>
<feature type="compositionally biased region" description="Basic and acidic residues" evidence="2">
    <location>
        <begin position="303"/>
        <end position="322"/>
    </location>
</feature>
<feature type="active site" description="Charge relay system; for autoendoproteolytic cleavage activity" evidence="1">
    <location>
        <position position="90"/>
    </location>
</feature>
<feature type="active site" description="Charge relay system; for autoendoproteolytic cleavage activity" evidence="1">
    <location>
        <position position="147"/>
    </location>
</feature>
<feature type="active site" description="Charge relay system; for autoendoproteolytic cleavage activity" evidence="1">
    <location>
        <position position="254"/>
    </location>
</feature>
<feature type="active site" description="Schiff-base intermediate with substrate; via pyruvic acid; for decarboxylase activity" evidence="1">
    <location>
        <position position="254"/>
    </location>
</feature>
<feature type="site" description="Cleavage (non-hydrolytic); by autocatalysis" evidence="1">
    <location>
        <begin position="253"/>
        <end position="254"/>
    </location>
</feature>
<feature type="modified residue" description="Pyruvic acid (Ser); by autocatalysis" evidence="1">
    <location>
        <position position="254"/>
    </location>
</feature>
<protein>
    <recommendedName>
        <fullName evidence="1">Phosphatidylserine decarboxylase proenzyme</fullName>
        <ecNumber evidence="1">4.1.1.65</ecNumber>
    </recommendedName>
    <component>
        <recommendedName>
            <fullName evidence="1">Phosphatidylserine decarboxylase alpha chain</fullName>
        </recommendedName>
    </component>
    <component>
        <recommendedName>
            <fullName evidence="1">Phosphatidylserine decarboxylase beta chain</fullName>
        </recommendedName>
    </component>
</protein>
<evidence type="ECO:0000255" key="1">
    <source>
        <dbReference type="HAMAP-Rule" id="MF_00662"/>
    </source>
</evidence>
<evidence type="ECO:0000256" key="2">
    <source>
        <dbReference type="SAM" id="MobiDB-lite"/>
    </source>
</evidence>
<name>PSD_SALTI</name>
<proteinExistence type="inferred from homology"/>
<gene>
    <name evidence="1" type="primary">psd</name>
    <name type="ordered locus">STY4708</name>
    <name type="ordered locus">t4400</name>
</gene>
<keyword id="KW-1003">Cell membrane</keyword>
<keyword id="KW-0210">Decarboxylase</keyword>
<keyword id="KW-0444">Lipid biosynthesis</keyword>
<keyword id="KW-0443">Lipid metabolism</keyword>
<keyword id="KW-0456">Lyase</keyword>
<keyword id="KW-0472">Membrane</keyword>
<keyword id="KW-0594">Phospholipid biosynthesis</keyword>
<keyword id="KW-1208">Phospholipid metabolism</keyword>
<keyword id="KW-0670">Pyruvate</keyword>
<keyword id="KW-0865">Zymogen</keyword>
<reference key="1">
    <citation type="journal article" date="2001" name="Nature">
        <title>Complete genome sequence of a multiple drug resistant Salmonella enterica serovar Typhi CT18.</title>
        <authorList>
            <person name="Parkhill J."/>
            <person name="Dougan G."/>
            <person name="James K.D."/>
            <person name="Thomson N.R."/>
            <person name="Pickard D."/>
            <person name="Wain J."/>
            <person name="Churcher C.M."/>
            <person name="Mungall K.L."/>
            <person name="Bentley S.D."/>
            <person name="Holden M.T.G."/>
            <person name="Sebaihia M."/>
            <person name="Baker S."/>
            <person name="Basham D."/>
            <person name="Brooks K."/>
            <person name="Chillingworth T."/>
            <person name="Connerton P."/>
            <person name="Cronin A."/>
            <person name="Davis P."/>
            <person name="Davies R.M."/>
            <person name="Dowd L."/>
            <person name="White N."/>
            <person name="Farrar J."/>
            <person name="Feltwell T."/>
            <person name="Hamlin N."/>
            <person name="Haque A."/>
            <person name="Hien T.T."/>
            <person name="Holroyd S."/>
            <person name="Jagels K."/>
            <person name="Krogh A."/>
            <person name="Larsen T.S."/>
            <person name="Leather S."/>
            <person name="Moule S."/>
            <person name="O'Gaora P."/>
            <person name="Parry C."/>
            <person name="Quail M.A."/>
            <person name="Rutherford K.M."/>
            <person name="Simmonds M."/>
            <person name="Skelton J."/>
            <person name="Stevens K."/>
            <person name="Whitehead S."/>
            <person name="Barrell B.G."/>
        </authorList>
    </citation>
    <scope>NUCLEOTIDE SEQUENCE [LARGE SCALE GENOMIC DNA]</scope>
    <source>
        <strain>CT18</strain>
    </source>
</reference>
<reference key="2">
    <citation type="journal article" date="2003" name="J. Bacteriol.">
        <title>Comparative genomics of Salmonella enterica serovar Typhi strains Ty2 and CT18.</title>
        <authorList>
            <person name="Deng W."/>
            <person name="Liou S.-R."/>
            <person name="Plunkett G. III"/>
            <person name="Mayhew G.F."/>
            <person name="Rose D.J."/>
            <person name="Burland V."/>
            <person name="Kodoyianni V."/>
            <person name="Schwartz D.C."/>
            <person name="Blattner F.R."/>
        </authorList>
    </citation>
    <scope>NUCLEOTIDE SEQUENCE [LARGE SCALE GENOMIC DNA]</scope>
    <source>
        <strain>ATCC 700931 / Ty2</strain>
    </source>
</reference>
<organism>
    <name type="scientific">Salmonella typhi</name>
    <dbReference type="NCBI Taxonomy" id="90370"/>
    <lineage>
        <taxon>Bacteria</taxon>
        <taxon>Pseudomonadati</taxon>
        <taxon>Pseudomonadota</taxon>
        <taxon>Gammaproteobacteria</taxon>
        <taxon>Enterobacterales</taxon>
        <taxon>Enterobacteriaceae</taxon>
        <taxon>Salmonella</taxon>
    </lineage>
</organism>